<comment type="function">
    <text evidence="3 5">Member of the two-component regulatory system DpiA/DpiB, which is essential for expression of citrate-specific fermentation genes and genes involved in plasmid inheritance. Could be involved in response to both the presence of citrate and external redox conditions. Functions as a sensor kinase that phosphorylates DpiA in the presence of citrate.</text>
</comment>
<comment type="catalytic activity">
    <reaction>
        <text>ATP + protein L-histidine = ADP + protein N-phospho-L-histidine.</text>
        <dbReference type="EC" id="2.7.13.3"/>
    </reaction>
</comment>
<comment type="activity regulation">
    <text evidence="5">Autophosphorylation is induced in vitro by dithiothreitol (DTT).</text>
</comment>
<comment type="subcellular location">
    <subcellularLocation>
        <location evidence="4">Cell inner membrane</location>
        <topology evidence="4">Multi-pass membrane protein</topology>
    </subcellularLocation>
</comment>
<comment type="domain">
    <text evidence="3 5">The periplasmic domain binds citrate with high affinity. The C-terminal cytoplasmic domain senses reduced conditions using a single Cys in vitro.</text>
</comment>
<comment type="PTM">
    <text>Autophosphorylated.</text>
</comment>
<protein>
    <recommendedName>
        <fullName>Sensor histidine kinase DpiB</fullName>
        <ecNumber>2.7.13.3</ecNumber>
    </recommendedName>
    <alternativeName>
        <fullName>Sensor histidine kinase CitA</fullName>
    </alternativeName>
</protein>
<proteinExistence type="evidence at protein level"/>
<feature type="chain" id="PRO_0000074732" description="Sensor histidine kinase DpiB">
    <location>
        <begin position="1"/>
        <end position="552"/>
    </location>
</feature>
<feature type="topological domain" description="Cytoplasmic" evidence="1">
    <location>
        <begin position="1"/>
        <end position="21"/>
    </location>
</feature>
<feature type="transmembrane region" description="Helical" evidence="1">
    <location>
        <begin position="22"/>
        <end position="42"/>
    </location>
</feature>
<feature type="topological domain" description="Periplasmic" evidence="1">
    <location>
        <begin position="43"/>
        <end position="182"/>
    </location>
</feature>
<feature type="transmembrane region" description="Helical" evidence="1">
    <location>
        <begin position="183"/>
        <end position="203"/>
    </location>
</feature>
<feature type="topological domain" description="Cytoplasmic" evidence="1">
    <location>
        <begin position="204"/>
        <end position="552"/>
    </location>
</feature>
<feature type="domain" description="PAS">
    <location>
        <begin position="222"/>
        <end position="292"/>
    </location>
</feature>
<feature type="domain" description="Histidine kinase" evidence="2">
    <location>
        <begin position="344"/>
        <end position="541"/>
    </location>
</feature>
<feature type="modified residue" description="Phosphohistidine; by autocatalysis" evidence="2">
    <location>
        <position position="347"/>
    </location>
</feature>
<feature type="mutagenesis site" description="Strongly reduces citrate binding." evidence="3">
    <original>G</original>
    <variation>R</variation>
    <location>
        <position position="138"/>
    </location>
</feature>
<feature type="mutagenesis site" description="Loss of autophosphorylation." evidence="5">
    <original>C</original>
    <variation>A</variation>
    <location>
        <position position="478"/>
    </location>
</feature>
<feature type="mutagenesis site" description="Decrease in autophosphorylation." evidence="5">
    <original>C</original>
    <variation>A</variation>
    <location>
        <position position="517"/>
    </location>
</feature>
<feature type="mutagenesis site" description="Constitutively active." evidence="5">
    <original>C</original>
    <variation>A</variation>
    <location>
        <position position="529"/>
    </location>
</feature>
<feature type="sequence conflict" description="In Ref. 1; AAC28951." evidence="6" ref="1">
    <original>GGVITLEDNDPCGTLFSIYIPKVKPNDSSINPIDR</original>
    <variation>VVLSLSKIMIPAVPYFQSIFRK</variation>
    <location>
        <begin position="518"/>
        <end position="552"/>
    </location>
</feature>
<gene>
    <name type="primary">dpiB</name>
    <name type="synonym">citA</name>
    <name type="synonym">mpdB</name>
    <name type="synonym">ybeP</name>
    <name type="ordered locus">b0619</name>
    <name type="ordered locus">JW0611</name>
</gene>
<accession>P77510</accession>
<accession>O54338</accession>
<name>DPIB_ECOLI</name>
<keyword id="KW-0067">ATP-binding</keyword>
<keyword id="KW-0997">Cell inner membrane</keyword>
<keyword id="KW-1003">Cell membrane</keyword>
<keyword id="KW-0418">Kinase</keyword>
<keyword id="KW-0472">Membrane</keyword>
<keyword id="KW-0547">Nucleotide-binding</keyword>
<keyword id="KW-0597">Phosphoprotein</keyword>
<keyword id="KW-1185">Reference proteome</keyword>
<keyword id="KW-0808">Transferase</keyword>
<keyword id="KW-0812">Transmembrane</keyword>
<keyword id="KW-1133">Transmembrane helix</keyword>
<keyword id="KW-0902">Two-component regulatory system</keyword>
<evidence type="ECO:0000255" key="1"/>
<evidence type="ECO:0000255" key="2">
    <source>
        <dbReference type="PROSITE-ProRule" id="PRU00107"/>
    </source>
</evidence>
<evidence type="ECO:0000269" key="3">
    <source>
    </source>
</evidence>
<evidence type="ECO:0000269" key="4">
    <source>
    </source>
</evidence>
<evidence type="ECO:0000269" key="5">
    <source>
    </source>
</evidence>
<evidence type="ECO:0000305" key="6"/>
<sequence>MLQLNENKQFAFFQRLAFPLRIFLLILVFSIFVIAALAQYFTASFEDYLTLHVRDMAMNQAKIIASNDSVISAVKTRDYKRLATIANKLQRDTDFDYVVIGDRHSIRLYHPNPEKIGYPMQFTKQGALEKGESYFITGKGSMGMAMRAKTPIFDDDGKVIGVVSIGYLVSKIDSWRAEFLLPMAGVFVVLLGILMLLSWFLAAHIRRQMMGMEPKQIARVVRQQEALFSSVYEGLIAVDPHGYITAINRNARKMLGLSSPGRQWLGKPIVEVVRPADFFTEQIDEKRQDVVANFNGLSVIANREAIRSGDDLLGAIISFRSKDEISTLNAQLTQIKQYVESLRTLRHEHLNWMSTLNGLLQMKEYDRVLAMVQGESQAQQQLIDSLREAFADRQVAGLLFGKVQRARELGLKMIIVPGSQLSQLPPGLDSTEFAAIVGNLLDNAFEASLRSDEGNKIVELFLSDEGDDVVIEVADQGCGVPESLRDKIFEQGVSTRADEPGEHGIGLYLIASYVTRCGGVITLEDNDPCGTLFSIYIPKVKPNDSSINPIDR</sequence>
<dbReference type="EC" id="2.7.13.3"/>
<dbReference type="EMBL" id="U46667">
    <property type="protein sequence ID" value="AAC28951.1"/>
    <property type="molecule type" value="Genomic_DNA"/>
</dbReference>
<dbReference type="EMBL" id="U82598">
    <property type="protein sequence ID" value="AAB40819.1"/>
    <property type="molecule type" value="Genomic_DNA"/>
</dbReference>
<dbReference type="EMBL" id="U00096">
    <property type="protein sequence ID" value="AAC73720.1"/>
    <property type="molecule type" value="Genomic_DNA"/>
</dbReference>
<dbReference type="EMBL" id="AP009048">
    <property type="protein sequence ID" value="BAA35255.1"/>
    <property type="molecule type" value="Genomic_DNA"/>
</dbReference>
<dbReference type="PIR" id="A64796">
    <property type="entry name" value="A64796"/>
</dbReference>
<dbReference type="RefSeq" id="NP_415152.1">
    <property type="nucleotide sequence ID" value="NC_000913.3"/>
</dbReference>
<dbReference type="RefSeq" id="WP_000939767.1">
    <property type="nucleotide sequence ID" value="NZ_SSZK01000032.1"/>
</dbReference>
<dbReference type="SMR" id="P77510"/>
<dbReference type="BioGRID" id="4263372">
    <property type="interactions" value="20"/>
</dbReference>
<dbReference type="FunCoup" id="P77510">
    <property type="interactions" value="196"/>
</dbReference>
<dbReference type="IntAct" id="P77510">
    <property type="interactions" value="6"/>
</dbReference>
<dbReference type="STRING" id="511145.b0619"/>
<dbReference type="PaxDb" id="511145-b0619"/>
<dbReference type="EnsemblBacteria" id="AAC73720">
    <property type="protein sequence ID" value="AAC73720"/>
    <property type="gene ID" value="b0619"/>
</dbReference>
<dbReference type="GeneID" id="945233"/>
<dbReference type="KEGG" id="ecj:JW0611"/>
<dbReference type="KEGG" id="eco:b0619"/>
<dbReference type="KEGG" id="ecoc:C3026_03095"/>
<dbReference type="PATRIC" id="fig|511145.12.peg.649"/>
<dbReference type="EchoBASE" id="EB3410"/>
<dbReference type="eggNOG" id="COG3290">
    <property type="taxonomic scope" value="Bacteria"/>
</dbReference>
<dbReference type="HOGENOM" id="CLU_020211_11_2_6"/>
<dbReference type="InParanoid" id="P77510"/>
<dbReference type="OMA" id="QNGFITM"/>
<dbReference type="OrthoDB" id="9792686at2"/>
<dbReference type="PhylomeDB" id="P77510"/>
<dbReference type="BioCyc" id="EcoCyc:G6345-MONOMER"/>
<dbReference type="BioCyc" id="MetaCyc:G6345-MONOMER"/>
<dbReference type="BRENDA" id="2.7.13.3">
    <property type="organism ID" value="2026"/>
</dbReference>
<dbReference type="PRO" id="PR:P77510"/>
<dbReference type="Proteomes" id="UP000000625">
    <property type="component" value="Chromosome"/>
</dbReference>
<dbReference type="GO" id="GO:0005829">
    <property type="term" value="C:cytosol"/>
    <property type="evidence" value="ECO:0000255"/>
    <property type="project" value="EcoCyc"/>
</dbReference>
<dbReference type="GO" id="GO:0030288">
    <property type="term" value="C:outer membrane-bounded periplasmic space"/>
    <property type="evidence" value="ECO:0000255"/>
    <property type="project" value="EcoCyc"/>
</dbReference>
<dbReference type="GO" id="GO:0005886">
    <property type="term" value="C:plasma membrane"/>
    <property type="evidence" value="ECO:0000314"/>
    <property type="project" value="EcoCyc"/>
</dbReference>
<dbReference type="GO" id="GO:0005524">
    <property type="term" value="F:ATP binding"/>
    <property type="evidence" value="ECO:0007669"/>
    <property type="project" value="UniProtKB-KW"/>
</dbReference>
<dbReference type="GO" id="GO:0009927">
    <property type="term" value="F:histidine phosphotransfer kinase activity"/>
    <property type="evidence" value="ECO:0000318"/>
    <property type="project" value="GO_Central"/>
</dbReference>
<dbReference type="GO" id="GO:0000155">
    <property type="term" value="F:phosphorelay sensor kinase activity"/>
    <property type="evidence" value="ECO:0000318"/>
    <property type="project" value="GO_Central"/>
</dbReference>
<dbReference type="GO" id="GO:0004673">
    <property type="term" value="F:protein histidine kinase activity"/>
    <property type="evidence" value="ECO:0000314"/>
    <property type="project" value="EcoCyc"/>
</dbReference>
<dbReference type="GO" id="GO:0000160">
    <property type="term" value="P:phosphorelay signal transduction system"/>
    <property type="evidence" value="ECO:0000318"/>
    <property type="project" value="GO_Central"/>
</dbReference>
<dbReference type="GO" id="GO:0006355">
    <property type="term" value="P:regulation of DNA-templated transcription"/>
    <property type="evidence" value="ECO:0007669"/>
    <property type="project" value="InterPro"/>
</dbReference>
<dbReference type="CDD" id="cd16915">
    <property type="entry name" value="HATPase_DpiB-CitA-like"/>
    <property type="match status" value="1"/>
</dbReference>
<dbReference type="CDD" id="cd00130">
    <property type="entry name" value="PAS"/>
    <property type="match status" value="1"/>
</dbReference>
<dbReference type="CDD" id="cd18773">
    <property type="entry name" value="PDC1_HK_sensor"/>
    <property type="match status" value="1"/>
</dbReference>
<dbReference type="FunFam" id="3.30.450.20:FF:000018">
    <property type="entry name" value="Sensor histidine kinase DcuS"/>
    <property type="match status" value="1"/>
</dbReference>
<dbReference type="FunFam" id="1.10.287.130:FF:000020">
    <property type="entry name" value="Sensor histidine kinase DpiB"/>
    <property type="match status" value="1"/>
</dbReference>
<dbReference type="FunFam" id="3.30.450.20:FF:000049">
    <property type="entry name" value="Sensor histidine kinase DpiB"/>
    <property type="match status" value="1"/>
</dbReference>
<dbReference type="FunFam" id="3.30.565.10:FF:000040">
    <property type="entry name" value="Sensor histidine kinase DpiB"/>
    <property type="match status" value="1"/>
</dbReference>
<dbReference type="Gene3D" id="1.10.287.130">
    <property type="match status" value="1"/>
</dbReference>
<dbReference type="Gene3D" id="3.30.565.10">
    <property type="entry name" value="Histidine kinase-like ATPase, C-terminal domain"/>
    <property type="match status" value="1"/>
</dbReference>
<dbReference type="Gene3D" id="3.30.450.20">
    <property type="entry name" value="PAS domain"/>
    <property type="match status" value="2"/>
</dbReference>
<dbReference type="InterPro" id="IPR036890">
    <property type="entry name" value="HATPase_C_sf"/>
</dbReference>
<dbReference type="InterPro" id="IPR005467">
    <property type="entry name" value="His_kinase_dom"/>
</dbReference>
<dbReference type="InterPro" id="IPR000014">
    <property type="entry name" value="PAS"/>
</dbReference>
<dbReference type="InterPro" id="IPR035965">
    <property type="entry name" value="PAS-like_dom_sf"/>
</dbReference>
<dbReference type="InterPro" id="IPR013767">
    <property type="entry name" value="PAS_fold"/>
</dbReference>
<dbReference type="InterPro" id="IPR033463">
    <property type="entry name" value="sCache_3"/>
</dbReference>
<dbReference type="InterPro" id="IPR029151">
    <property type="entry name" value="Sensor-like_sf"/>
</dbReference>
<dbReference type="InterPro" id="IPR004358">
    <property type="entry name" value="Sig_transdc_His_kin-like_C"/>
</dbReference>
<dbReference type="InterPro" id="IPR016120">
    <property type="entry name" value="Sig_transdc_His_kin_SpoOB"/>
</dbReference>
<dbReference type="NCBIfam" id="NF011627">
    <property type="entry name" value="PRK15053.1"/>
    <property type="match status" value="1"/>
</dbReference>
<dbReference type="PANTHER" id="PTHR43547:SF10">
    <property type="entry name" value="SENSOR HISTIDINE KINASE DCUS"/>
    <property type="match status" value="1"/>
</dbReference>
<dbReference type="PANTHER" id="PTHR43547">
    <property type="entry name" value="TWO-COMPONENT HISTIDINE KINASE"/>
    <property type="match status" value="1"/>
</dbReference>
<dbReference type="Pfam" id="PF02518">
    <property type="entry name" value="HATPase_c"/>
    <property type="match status" value="1"/>
</dbReference>
<dbReference type="Pfam" id="PF00989">
    <property type="entry name" value="PAS"/>
    <property type="match status" value="1"/>
</dbReference>
<dbReference type="Pfam" id="PF17203">
    <property type="entry name" value="sCache_3_2"/>
    <property type="match status" value="1"/>
</dbReference>
<dbReference type="PRINTS" id="PR00344">
    <property type="entry name" value="BCTRLSENSOR"/>
</dbReference>
<dbReference type="SMART" id="SM00387">
    <property type="entry name" value="HATPase_c"/>
    <property type="match status" value="1"/>
</dbReference>
<dbReference type="SMART" id="SM00091">
    <property type="entry name" value="PAS"/>
    <property type="match status" value="1"/>
</dbReference>
<dbReference type="SUPFAM" id="SSF55874">
    <property type="entry name" value="ATPase domain of HSP90 chaperone/DNA topoisomerase II/histidine kinase"/>
    <property type="match status" value="1"/>
</dbReference>
<dbReference type="SUPFAM" id="SSF55785">
    <property type="entry name" value="PYP-like sensor domain (PAS domain)"/>
    <property type="match status" value="1"/>
</dbReference>
<dbReference type="SUPFAM" id="SSF103190">
    <property type="entry name" value="Sensory domain-like"/>
    <property type="match status" value="1"/>
</dbReference>
<dbReference type="SUPFAM" id="SSF55890">
    <property type="entry name" value="Sporulation response regulatory protein Spo0B"/>
    <property type="match status" value="1"/>
</dbReference>
<dbReference type="PROSITE" id="PS50109">
    <property type="entry name" value="HIS_KIN"/>
    <property type="match status" value="1"/>
</dbReference>
<organism>
    <name type="scientific">Escherichia coli (strain K12)</name>
    <dbReference type="NCBI Taxonomy" id="83333"/>
    <lineage>
        <taxon>Bacteria</taxon>
        <taxon>Pseudomonadati</taxon>
        <taxon>Pseudomonadota</taxon>
        <taxon>Gammaproteobacteria</taxon>
        <taxon>Enterobacterales</taxon>
        <taxon>Enterobacteriaceae</taxon>
        <taxon>Escherichia</taxon>
    </lineage>
</organism>
<reference key="1">
    <citation type="journal article" date="1998" name="Mol. Microbiol.">
        <title>Destabilized inheritance of pSC101 and other Escherichia coli plasmids by DpiA, a novel two-component system regulator.</title>
        <authorList>
            <person name="Ingmer H."/>
            <person name="Miller C.A."/>
            <person name="Cohen S.N."/>
        </authorList>
    </citation>
    <scope>NUCLEOTIDE SEQUENCE [GENOMIC DNA]</scope>
    <scope>CHARACTERIZATION</scope>
    <source>
        <strain>K12 / MG1655 / ATCC 47076</strain>
    </source>
</reference>
<reference key="2">
    <citation type="journal article" date="1996" name="DNA Res.">
        <title>A 718-kb DNA sequence of the Escherichia coli K-12 genome corresponding to the 12.7-28.0 min region on the linkage map.</title>
        <authorList>
            <person name="Oshima T."/>
            <person name="Aiba H."/>
            <person name="Baba T."/>
            <person name="Fujita K."/>
            <person name="Hayashi K."/>
            <person name="Honjo A."/>
            <person name="Ikemoto K."/>
            <person name="Inada T."/>
            <person name="Itoh T."/>
            <person name="Kajihara M."/>
            <person name="Kanai K."/>
            <person name="Kashimoto K."/>
            <person name="Kimura S."/>
            <person name="Kitagawa M."/>
            <person name="Makino K."/>
            <person name="Masuda S."/>
            <person name="Miki T."/>
            <person name="Mizobuchi K."/>
            <person name="Mori H."/>
            <person name="Motomura K."/>
            <person name="Nakamura Y."/>
            <person name="Nashimoto H."/>
            <person name="Nishio Y."/>
            <person name="Saito N."/>
            <person name="Sampei G."/>
            <person name="Seki Y."/>
            <person name="Tagami H."/>
            <person name="Takemoto K."/>
            <person name="Wada C."/>
            <person name="Yamamoto Y."/>
            <person name="Yano M."/>
            <person name="Horiuchi T."/>
        </authorList>
    </citation>
    <scope>NUCLEOTIDE SEQUENCE [LARGE SCALE GENOMIC DNA]</scope>
    <source>
        <strain>K12 / W3110 / ATCC 27325 / DSM 5911</strain>
    </source>
</reference>
<reference key="3">
    <citation type="submission" date="1997-01" db="EMBL/GenBank/DDBJ databases">
        <title>Sequence of minutes 4-25 of Escherichia coli.</title>
        <authorList>
            <person name="Chung E."/>
            <person name="Allen E."/>
            <person name="Araujo R."/>
            <person name="Aparicio A.M."/>
            <person name="Davis K."/>
            <person name="Duncan M."/>
            <person name="Federspiel N."/>
            <person name="Hyman R."/>
            <person name="Kalman S."/>
            <person name="Komp C."/>
            <person name="Kurdi O."/>
            <person name="Lew H."/>
            <person name="Lin D."/>
            <person name="Namath A."/>
            <person name="Oefner P."/>
            <person name="Roberts D."/>
            <person name="Schramm S."/>
            <person name="Davis R.W."/>
        </authorList>
    </citation>
    <scope>NUCLEOTIDE SEQUENCE [LARGE SCALE GENOMIC DNA]</scope>
    <source>
        <strain>K12 / MG1655 / ATCC 47076</strain>
    </source>
</reference>
<reference key="4">
    <citation type="journal article" date="1997" name="Science">
        <title>The complete genome sequence of Escherichia coli K-12.</title>
        <authorList>
            <person name="Blattner F.R."/>
            <person name="Plunkett G. III"/>
            <person name="Bloch C.A."/>
            <person name="Perna N.T."/>
            <person name="Burland V."/>
            <person name="Riley M."/>
            <person name="Collado-Vides J."/>
            <person name="Glasner J.D."/>
            <person name="Rode C.K."/>
            <person name="Mayhew G.F."/>
            <person name="Gregor J."/>
            <person name="Davis N.W."/>
            <person name="Kirkpatrick H.A."/>
            <person name="Goeden M.A."/>
            <person name="Rose D.J."/>
            <person name="Mau B."/>
            <person name="Shao Y."/>
        </authorList>
    </citation>
    <scope>NUCLEOTIDE SEQUENCE [LARGE SCALE GENOMIC DNA]</scope>
    <source>
        <strain>K12 / MG1655 / ATCC 47076</strain>
    </source>
</reference>
<reference key="5">
    <citation type="journal article" date="2006" name="Mol. Syst. Biol.">
        <title>Highly accurate genome sequences of Escherichia coli K-12 strains MG1655 and W3110.</title>
        <authorList>
            <person name="Hayashi K."/>
            <person name="Morooka N."/>
            <person name="Yamamoto Y."/>
            <person name="Fujita K."/>
            <person name="Isono K."/>
            <person name="Choi S."/>
            <person name="Ohtsubo E."/>
            <person name="Baba T."/>
            <person name="Wanner B.L."/>
            <person name="Mori H."/>
            <person name="Horiuchi T."/>
        </authorList>
    </citation>
    <scope>NUCLEOTIDE SEQUENCE [LARGE SCALE GENOMIC DNA]</scope>
    <source>
        <strain>K12 / W3110 / ATCC 27325 / DSM 5911</strain>
    </source>
</reference>
<reference key="6">
    <citation type="journal article" date="2002" name="Arch. Microbiol.">
        <title>The sensor kinase CitA (DpiB) of Escherichia coli functions as a high-affinity citrate receptor.</title>
        <authorList>
            <person name="Kaspar S."/>
            <person name="Bott M."/>
        </authorList>
    </citation>
    <scope>FUNCTION</scope>
    <scope>CITRATE-BINDING</scope>
    <scope>DOMAIN</scope>
    <scope>MUTAGENESIS OF GLY-138</scope>
</reference>
<reference key="7">
    <citation type="journal article" date="2005" name="Science">
        <title>Global topology analysis of the Escherichia coli inner membrane proteome.</title>
        <authorList>
            <person name="Daley D.O."/>
            <person name="Rapp M."/>
            <person name="Granseth E."/>
            <person name="Melen K."/>
            <person name="Drew D."/>
            <person name="von Heijne G."/>
        </authorList>
    </citation>
    <scope>SUBCELLULAR LOCATION</scope>
    <source>
        <strain>K12 / MG1655 / ATCC 47076</strain>
    </source>
</reference>
<reference key="8">
    <citation type="journal article" date="2009" name="Biosci. Biotechnol. Biochem.">
        <title>Characterization of CitA-CitB signal transduction activating genes involved in anaerobic citrate catabolism in Escherichia coli.</title>
        <authorList>
            <person name="Yamamoto K."/>
            <person name="Matsumoto F."/>
            <person name="Minagawa S."/>
            <person name="Oshima T."/>
            <person name="Fujita N."/>
            <person name="Ogasawara N."/>
            <person name="Ishihama A."/>
        </authorList>
    </citation>
    <scope>FUNCTION</scope>
    <scope>ACTIVITY REGULATION</scope>
    <scope>DOMAIN</scope>
    <scope>AUTOPHOSPHORYLATION</scope>
    <scope>MUTAGENESIS OF CYS-478; CYS-517 AND CYS-529</scope>
</reference>